<keyword id="KW-0963">Cytoplasm</keyword>
<keyword id="KW-0520">NAD</keyword>
<keyword id="KW-0560">Oxidoreductase</keyword>
<keyword id="KW-0664">Pyridoxine biosynthesis</keyword>
<evidence type="ECO:0000255" key="1">
    <source>
        <dbReference type="HAMAP-Rule" id="MF_01825"/>
    </source>
</evidence>
<organism>
    <name type="scientific">Aliivibrio salmonicida (strain LFI1238)</name>
    <name type="common">Vibrio salmonicida (strain LFI1238)</name>
    <dbReference type="NCBI Taxonomy" id="316275"/>
    <lineage>
        <taxon>Bacteria</taxon>
        <taxon>Pseudomonadati</taxon>
        <taxon>Pseudomonadota</taxon>
        <taxon>Gammaproteobacteria</taxon>
        <taxon>Vibrionales</taxon>
        <taxon>Vibrionaceae</taxon>
        <taxon>Aliivibrio</taxon>
    </lineage>
</organism>
<sequence length="376" mass="41682">MKILIDENMPYAAELFSELGEVIAKSGRTLTADDLIDVDALMIRSVTKVNSELLSKANKLSFVGTATAGMDHVNQALLKNKGVFFTAAPGCNKVGVAEYVLSCVMVLAQQHGFSIFDKTFGIIGAGQVGSYLAQCLDALSIPYLLNDPIKEQEGDTRSFVSLDELLEKSDVISLHTPITRDGNFPTHHLIGQERLLTLRHDQILINAARGPVVDNDALKNRLLIQDGFKAVLDVFEFEPEVDIALLPLLSFATPHIAGYGLEGKARGTTMIFNSFCEFLQREERADPQNLLPVAPIPNVTLNQQWDHSTLHNLIQLVYDVRKDDAVFRKEISTIGAFDNMRKDYWDRREYSAITITGNKDCGLTPLKQLGFTIEEV</sequence>
<comment type="function">
    <text evidence="1">Catalyzes the oxidation of erythronate-4-phosphate to 3-hydroxy-2-oxo-4-phosphonooxybutanoate.</text>
</comment>
<comment type="catalytic activity">
    <reaction evidence="1">
        <text>4-phospho-D-erythronate + NAD(+) = (R)-3-hydroxy-2-oxo-4-phosphooxybutanoate + NADH + H(+)</text>
        <dbReference type="Rhea" id="RHEA:18829"/>
        <dbReference type="ChEBI" id="CHEBI:15378"/>
        <dbReference type="ChEBI" id="CHEBI:57540"/>
        <dbReference type="ChEBI" id="CHEBI:57945"/>
        <dbReference type="ChEBI" id="CHEBI:58538"/>
        <dbReference type="ChEBI" id="CHEBI:58766"/>
        <dbReference type="EC" id="1.1.1.290"/>
    </reaction>
</comment>
<comment type="pathway">
    <text evidence="1">Cofactor biosynthesis; pyridoxine 5'-phosphate biosynthesis; pyridoxine 5'-phosphate from D-erythrose 4-phosphate: step 2/5.</text>
</comment>
<comment type="subunit">
    <text evidence="1">Homodimer.</text>
</comment>
<comment type="subcellular location">
    <subcellularLocation>
        <location evidence="1">Cytoplasm</location>
    </subcellularLocation>
</comment>
<comment type="similarity">
    <text evidence="1">Belongs to the D-isomer specific 2-hydroxyacid dehydrogenase family. PdxB subfamily.</text>
</comment>
<protein>
    <recommendedName>
        <fullName evidence="1">Erythronate-4-phosphate dehydrogenase</fullName>
        <ecNumber evidence="1">1.1.1.290</ecNumber>
    </recommendedName>
</protein>
<accession>B6EIW3</accession>
<feature type="chain" id="PRO_1000188256" description="Erythronate-4-phosphate dehydrogenase">
    <location>
        <begin position="1"/>
        <end position="376"/>
    </location>
</feature>
<feature type="active site" evidence="1">
    <location>
        <position position="209"/>
    </location>
</feature>
<feature type="active site" evidence="1">
    <location>
        <position position="238"/>
    </location>
</feature>
<feature type="active site" description="Proton donor" evidence="1">
    <location>
        <position position="255"/>
    </location>
</feature>
<feature type="binding site" evidence="1">
    <location>
        <position position="45"/>
    </location>
    <ligand>
        <name>substrate</name>
    </ligand>
</feature>
<feature type="binding site" evidence="1">
    <location>
        <position position="67"/>
    </location>
    <ligand>
        <name>substrate</name>
    </ligand>
</feature>
<feature type="binding site" evidence="1">
    <location>
        <begin position="127"/>
        <end position="128"/>
    </location>
    <ligand>
        <name>NAD(+)</name>
        <dbReference type="ChEBI" id="CHEBI:57540"/>
    </ligand>
</feature>
<feature type="binding site" evidence="1">
    <location>
        <position position="147"/>
    </location>
    <ligand>
        <name>NAD(+)</name>
        <dbReference type="ChEBI" id="CHEBI:57540"/>
    </ligand>
</feature>
<feature type="binding site" evidence="1">
    <location>
        <position position="176"/>
    </location>
    <ligand>
        <name>NAD(+)</name>
        <dbReference type="ChEBI" id="CHEBI:57540"/>
    </ligand>
</feature>
<feature type="binding site" evidence="1">
    <location>
        <position position="233"/>
    </location>
    <ligand>
        <name>NAD(+)</name>
        <dbReference type="ChEBI" id="CHEBI:57540"/>
    </ligand>
</feature>
<feature type="binding site" evidence="1">
    <location>
        <position position="258"/>
    </location>
    <ligand>
        <name>NAD(+)</name>
        <dbReference type="ChEBI" id="CHEBI:57540"/>
    </ligand>
</feature>
<feature type="binding site" evidence="1">
    <location>
        <position position="259"/>
    </location>
    <ligand>
        <name>substrate</name>
    </ligand>
</feature>
<dbReference type="EC" id="1.1.1.290" evidence="1"/>
<dbReference type="EMBL" id="FM178379">
    <property type="protein sequence ID" value="CAQ78757.1"/>
    <property type="molecule type" value="Genomic_DNA"/>
</dbReference>
<dbReference type="RefSeq" id="WP_012549827.1">
    <property type="nucleotide sequence ID" value="NC_011312.1"/>
</dbReference>
<dbReference type="SMR" id="B6EIW3"/>
<dbReference type="KEGG" id="vsa:VSAL_I1072"/>
<dbReference type="eggNOG" id="COG0111">
    <property type="taxonomic scope" value="Bacteria"/>
</dbReference>
<dbReference type="HOGENOM" id="CLU_019796_4_0_6"/>
<dbReference type="UniPathway" id="UPA00244">
    <property type="reaction ID" value="UER00310"/>
</dbReference>
<dbReference type="Proteomes" id="UP000001730">
    <property type="component" value="Chromosome 1"/>
</dbReference>
<dbReference type="GO" id="GO:0005829">
    <property type="term" value="C:cytosol"/>
    <property type="evidence" value="ECO:0007669"/>
    <property type="project" value="TreeGrafter"/>
</dbReference>
<dbReference type="GO" id="GO:0033711">
    <property type="term" value="F:4-phosphoerythronate dehydrogenase activity"/>
    <property type="evidence" value="ECO:0007669"/>
    <property type="project" value="UniProtKB-EC"/>
</dbReference>
<dbReference type="GO" id="GO:0030267">
    <property type="term" value="F:glyoxylate reductase (NADPH) activity"/>
    <property type="evidence" value="ECO:0007669"/>
    <property type="project" value="TreeGrafter"/>
</dbReference>
<dbReference type="GO" id="GO:0016618">
    <property type="term" value="F:hydroxypyruvate reductase [NAD(P)H] activity"/>
    <property type="evidence" value="ECO:0007669"/>
    <property type="project" value="TreeGrafter"/>
</dbReference>
<dbReference type="GO" id="GO:0051287">
    <property type="term" value="F:NAD binding"/>
    <property type="evidence" value="ECO:0007669"/>
    <property type="project" value="InterPro"/>
</dbReference>
<dbReference type="GO" id="GO:0046983">
    <property type="term" value="F:protein dimerization activity"/>
    <property type="evidence" value="ECO:0007669"/>
    <property type="project" value="InterPro"/>
</dbReference>
<dbReference type="GO" id="GO:0008615">
    <property type="term" value="P:pyridoxine biosynthetic process"/>
    <property type="evidence" value="ECO:0007669"/>
    <property type="project" value="UniProtKB-UniRule"/>
</dbReference>
<dbReference type="CDD" id="cd12158">
    <property type="entry name" value="ErythrP_dh"/>
    <property type="match status" value="1"/>
</dbReference>
<dbReference type="Gene3D" id="3.30.1370.170">
    <property type="match status" value="1"/>
</dbReference>
<dbReference type="Gene3D" id="3.40.50.720">
    <property type="entry name" value="NAD(P)-binding Rossmann-like Domain"/>
    <property type="match status" value="2"/>
</dbReference>
<dbReference type="HAMAP" id="MF_01825">
    <property type="entry name" value="PdxB"/>
    <property type="match status" value="1"/>
</dbReference>
<dbReference type="InterPro" id="IPR050223">
    <property type="entry name" value="D-isomer_2-hydroxyacid_DH"/>
</dbReference>
<dbReference type="InterPro" id="IPR006139">
    <property type="entry name" value="D-isomer_2_OHA_DH_cat_dom"/>
</dbReference>
<dbReference type="InterPro" id="IPR029753">
    <property type="entry name" value="D-isomer_DH_CS"/>
</dbReference>
<dbReference type="InterPro" id="IPR006140">
    <property type="entry name" value="D-isomer_DH_NAD-bd"/>
</dbReference>
<dbReference type="InterPro" id="IPR020921">
    <property type="entry name" value="Erythronate-4-P_DHase"/>
</dbReference>
<dbReference type="InterPro" id="IPR024531">
    <property type="entry name" value="Erythronate-4-P_DHase_dimer"/>
</dbReference>
<dbReference type="InterPro" id="IPR036291">
    <property type="entry name" value="NAD(P)-bd_dom_sf"/>
</dbReference>
<dbReference type="InterPro" id="IPR038251">
    <property type="entry name" value="PdxB_dimer_sf"/>
</dbReference>
<dbReference type="PANTHER" id="PTHR10996:SF178">
    <property type="entry name" value="2-HYDROXYACID DEHYDROGENASE YGL185C-RELATED"/>
    <property type="match status" value="1"/>
</dbReference>
<dbReference type="PANTHER" id="PTHR10996">
    <property type="entry name" value="2-HYDROXYACID DEHYDROGENASE-RELATED"/>
    <property type="match status" value="1"/>
</dbReference>
<dbReference type="Pfam" id="PF00389">
    <property type="entry name" value="2-Hacid_dh"/>
    <property type="match status" value="1"/>
</dbReference>
<dbReference type="Pfam" id="PF02826">
    <property type="entry name" value="2-Hacid_dh_C"/>
    <property type="match status" value="1"/>
</dbReference>
<dbReference type="Pfam" id="PF11890">
    <property type="entry name" value="DUF3410"/>
    <property type="match status" value="1"/>
</dbReference>
<dbReference type="SUPFAM" id="SSF52283">
    <property type="entry name" value="Formate/glycerate dehydrogenase catalytic domain-like"/>
    <property type="match status" value="1"/>
</dbReference>
<dbReference type="SUPFAM" id="SSF51735">
    <property type="entry name" value="NAD(P)-binding Rossmann-fold domains"/>
    <property type="match status" value="1"/>
</dbReference>
<dbReference type="PROSITE" id="PS00671">
    <property type="entry name" value="D_2_HYDROXYACID_DH_3"/>
    <property type="match status" value="1"/>
</dbReference>
<reference key="1">
    <citation type="journal article" date="2008" name="BMC Genomics">
        <title>The genome sequence of the fish pathogen Aliivibrio salmonicida strain LFI1238 shows extensive evidence of gene decay.</title>
        <authorList>
            <person name="Hjerde E."/>
            <person name="Lorentzen M.S."/>
            <person name="Holden M.T."/>
            <person name="Seeger K."/>
            <person name="Paulsen S."/>
            <person name="Bason N."/>
            <person name="Churcher C."/>
            <person name="Harris D."/>
            <person name="Norbertczak H."/>
            <person name="Quail M.A."/>
            <person name="Sanders S."/>
            <person name="Thurston S."/>
            <person name="Parkhill J."/>
            <person name="Willassen N.P."/>
            <person name="Thomson N.R."/>
        </authorList>
    </citation>
    <scope>NUCLEOTIDE SEQUENCE [LARGE SCALE GENOMIC DNA]</scope>
    <source>
        <strain>LFI1238</strain>
    </source>
</reference>
<proteinExistence type="inferred from homology"/>
<gene>
    <name evidence="1" type="primary">pdxB</name>
    <name type="ordered locus">VSAL_I1072</name>
</gene>
<name>PDXB_ALISL</name>